<feature type="chain" id="PRO_0000052801" description="Hemoglobin subunit alpha-2">
    <location>
        <begin position="1"/>
        <end position="141"/>
    </location>
</feature>
<feature type="domain" description="Globin" evidence="1">
    <location>
        <begin position="1"/>
        <end position="141"/>
    </location>
</feature>
<feature type="binding site" evidence="1">
    <location>
        <position position="58"/>
    </location>
    <ligand>
        <name>O2</name>
        <dbReference type="ChEBI" id="CHEBI:15379"/>
    </ligand>
</feature>
<feature type="binding site" description="proximal binding residue" evidence="1">
    <location>
        <position position="87"/>
    </location>
    <ligand>
        <name>heme b</name>
        <dbReference type="ChEBI" id="CHEBI:60344"/>
    </ligand>
    <ligandPart>
        <name>Fe</name>
        <dbReference type="ChEBI" id="CHEBI:18248"/>
    </ligandPart>
</feature>
<proteinExistence type="evidence at protein level"/>
<protein>
    <recommendedName>
        <fullName>Hemoglobin subunit alpha-2</fullName>
    </recommendedName>
    <alternativeName>
        <fullName>Alpha-2-globin</fullName>
    </alternativeName>
    <alternativeName>
        <fullName>Hemoglobin alpha-2 chain</fullName>
    </alternativeName>
    <alternativeName>
        <fullName>Hemoglobin alpha-II chain</fullName>
    </alternativeName>
</protein>
<reference key="1">
    <citation type="journal article" date="1991" name="Biol. Chem. Hoppe-Seyler">
        <title>Primary structure of hemoglobin from monitor lizard (Varanus exanthematicus albigularis -- Squamata).</title>
        <authorList>
            <person name="Abbasi A."/>
            <person name="Braunitzer G."/>
        </authorList>
    </citation>
    <scope>PROTEIN SEQUENCE</scope>
</reference>
<reference key="2">
    <citation type="book" date="1988" name="Protein structure-function relationship">
        <title>Hemoglobin -- structure, physiology and evolution.</title>
        <editorList>
            <person name="Zaidi Z.H."/>
        </editorList>
        <authorList>
            <person name="Abbasi A."/>
            <person name="Braunitzer G."/>
        </authorList>
    </citation>
    <scope>PROTEIN SEQUENCE</scope>
</reference>
<comment type="function">
    <text>Involved in oxygen transport from the lung to the various peripheral tissues.</text>
</comment>
<comment type="subunit">
    <text>The major hemoglobin component (HbIII) is a heterotetramer of two alpha-2 chains and two beta-1 chains.</text>
</comment>
<comment type="tissue specificity">
    <text>Red blood cells.</text>
</comment>
<comment type="similarity">
    <text evidence="1">Belongs to the globin family.</text>
</comment>
<keyword id="KW-0903">Direct protein sequencing</keyword>
<keyword id="KW-0349">Heme</keyword>
<keyword id="KW-0408">Iron</keyword>
<keyword id="KW-0479">Metal-binding</keyword>
<keyword id="KW-0561">Oxygen transport</keyword>
<keyword id="KW-0813">Transport</keyword>
<sequence>VLTEDDKNHVKGLWAHVHDHIDEIAADALTRMFLAHPASKTYFAHFDLSPDNAQIKAHGKKVANALNQAVAHLDDIKGTLSKLSELHAQQLRVDPVNFGFLRHCLEVSIAAHLHDHLKASVIVSLDKFLEEVCKDLVSKYR</sequence>
<organism>
    <name type="scientific">Varanus albigularis</name>
    <name type="common">White-throated monitor</name>
    <name type="synonym">Varanus exanthematicus albigularis</name>
    <dbReference type="NCBI Taxonomy" id="8558"/>
    <lineage>
        <taxon>Eukaryota</taxon>
        <taxon>Metazoa</taxon>
        <taxon>Chordata</taxon>
        <taxon>Craniata</taxon>
        <taxon>Vertebrata</taxon>
        <taxon>Euteleostomi</taxon>
        <taxon>Lepidosauria</taxon>
        <taxon>Squamata</taxon>
        <taxon>Bifurcata</taxon>
        <taxon>Unidentata</taxon>
        <taxon>Episquamata</taxon>
        <taxon>Toxicofera</taxon>
        <taxon>Anguimorpha</taxon>
        <taxon>Paleoanguimorpha</taxon>
        <taxon>Varanoidea</taxon>
        <taxon>Varanidae</taxon>
        <taxon>Varanus</taxon>
    </lineage>
</organism>
<name>HBA2_VARAL</name>
<evidence type="ECO:0000255" key="1">
    <source>
        <dbReference type="PROSITE-ProRule" id="PRU00238"/>
    </source>
</evidence>
<dbReference type="PIR" id="S16196">
    <property type="entry name" value="HALZC"/>
</dbReference>
<dbReference type="SMR" id="P18981"/>
<dbReference type="GO" id="GO:0072562">
    <property type="term" value="C:blood microparticle"/>
    <property type="evidence" value="ECO:0007669"/>
    <property type="project" value="TreeGrafter"/>
</dbReference>
<dbReference type="GO" id="GO:0031838">
    <property type="term" value="C:haptoglobin-hemoglobin complex"/>
    <property type="evidence" value="ECO:0007669"/>
    <property type="project" value="TreeGrafter"/>
</dbReference>
<dbReference type="GO" id="GO:0005833">
    <property type="term" value="C:hemoglobin complex"/>
    <property type="evidence" value="ECO:0007669"/>
    <property type="project" value="InterPro"/>
</dbReference>
<dbReference type="GO" id="GO:0031720">
    <property type="term" value="F:haptoglobin binding"/>
    <property type="evidence" value="ECO:0007669"/>
    <property type="project" value="TreeGrafter"/>
</dbReference>
<dbReference type="GO" id="GO:0020037">
    <property type="term" value="F:heme binding"/>
    <property type="evidence" value="ECO:0007669"/>
    <property type="project" value="InterPro"/>
</dbReference>
<dbReference type="GO" id="GO:0005506">
    <property type="term" value="F:iron ion binding"/>
    <property type="evidence" value="ECO:0007669"/>
    <property type="project" value="InterPro"/>
</dbReference>
<dbReference type="GO" id="GO:0043177">
    <property type="term" value="F:organic acid binding"/>
    <property type="evidence" value="ECO:0007669"/>
    <property type="project" value="TreeGrafter"/>
</dbReference>
<dbReference type="GO" id="GO:0019825">
    <property type="term" value="F:oxygen binding"/>
    <property type="evidence" value="ECO:0007669"/>
    <property type="project" value="InterPro"/>
</dbReference>
<dbReference type="GO" id="GO:0005344">
    <property type="term" value="F:oxygen carrier activity"/>
    <property type="evidence" value="ECO:0007669"/>
    <property type="project" value="UniProtKB-KW"/>
</dbReference>
<dbReference type="GO" id="GO:0004601">
    <property type="term" value="F:peroxidase activity"/>
    <property type="evidence" value="ECO:0007669"/>
    <property type="project" value="TreeGrafter"/>
</dbReference>
<dbReference type="GO" id="GO:0042744">
    <property type="term" value="P:hydrogen peroxide catabolic process"/>
    <property type="evidence" value="ECO:0007669"/>
    <property type="project" value="TreeGrafter"/>
</dbReference>
<dbReference type="CDD" id="cd08927">
    <property type="entry name" value="Hb-alpha-like"/>
    <property type="match status" value="1"/>
</dbReference>
<dbReference type="FunFam" id="1.10.490.10:FF:000002">
    <property type="entry name" value="Hemoglobin subunit alpha"/>
    <property type="match status" value="1"/>
</dbReference>
<dbReference type="Gene3D" id="1.10.490.10">
    <property type="entry name" value="Globins"/>
    <property type="match status" value="1"/>
</dbReference>
<dbReference type="InterPro" id="IPR000971">
    <property type="entry name" value="Globin"/>
</dbReference>
<dbReference type="InterPro" id="IPR009050">
    <property type="entry name" value="Globin-like_sf"/>
</dbReference>
<dbReference type="InterPro" id="IPR012292">
    <property type="entry name" value="Globin/Proto"/>
</dbReference>
<dbReference type="InterPro" id="IPR002338">
    <property type="entry name" value="Hemoglobin_a-typ"/>
</dbReference>
<dbReference type="InterPro" id="IPR050056">
    <property type="entry name" value="Hemoglobin_oxygen_transport"/>
</dbReference>
<dbReference type="InterPro" id="IPR002339">
    <property type="entry name" value="Hemoglobin_pi"/>
</dbReference>
<dbReference type="PANTHER" id="PTHR11442">
    <property type="entry name" value="HEMOGLOBIN FAMILY MEMBER"/>
    <property type="match status" value="1"/>
</dbReference>
<dbReference type="PANTHER" id="PTHR11442:SF48">
    <property type="entry name" value="HEMOGLOBIN SUBUNIT ALPHA"/>
    <property type="match status" value="1"/>
</dbReference>
<dbReference type="Pfam" id="PF00042">
    <property type="entry name" value="Globin"/>
    <property type="match status" value="1"/>
</dbReference>
<dbReference type="PRINTS" id="PR00612">
    <property type="entry name" value="ALPHAHAEM"/>
</dbReference>
<dbReference type="PRINTS" id="PR00815">
    <property type="entry name" value="PIHAEM"/>
</dbReference>
<dbReference type="SUPFAM" id="SSF46458">
    <property type="entry name" value="Globin-like"/>
    <property type="match status" value="1"/>
</dbReference>
<dbReference type="PROSITE" id="PS01033">
    <property type="entry name" value="GLOBIN"/>
    <property type="match status" value="1"/>
</dbReference>
<accession>P18981</accession>